<evidence type="ECO:0000250" key="1"/>
<evidence type="ECO:0000256" key="2">
    <source>
        <dbReference type="SAM" id="MobiDB-lite"/>
    </source>
</evidence>
<evidence type="ECO:0000305" key="3"/>
<dbReference type="EMBL" id="CR382134">
    <property type="protein sequence ID" value="CAG85428.2"/>
    <property type="molecule type" value="Genomic_DNA"/>
</dbReference>
<dbReference type="RefSeq" id="XP_457424.2">
    <property type="nucleotide sequence ID" value="XM_457424.1"/>
</dbReference>
<dbReference type="SMR" id="Q6BWJ5"/>
<dbReference type="FunCoup" id="Q6BWJ5">
    <property type="interactions" value="130"/>
</dbReference>
<dbReference type="STRING" id="284592.Q6BWJ5"/>
<dbReference type="GeneID" id="2913355"/>
<dbReference type="KEGG" id="dha:DEHA2B10824g"/>
<dbReference type="VEuPathDB" id="FungiDB:DEHA2B10824g"/>
<dbReference type="eggNOG" id="KOG2444">
    <property type="taxonomic scope" value="Eukaryota"/>
</dbReference>
<dbReference type="HOGENOM" id="CLU_035623_0_0_1"/>
<dbReference type="InParanoid" id="Q6BWJ5"/>
<dbReference type="OMA" id="DDNCIWC"/>
<dbReference type="OrthoDB" id="2288928at2759"/>
<dbReference type="Proteomes" id="UP000000599">
    <property type="component" value="Chromosome B"/>
</dbReference>
<dbReference type="GO" id="GO:0005730">
    <property type="term" value="C:nucleolus"/>
    <property type="evidence" value="ECO:0007669"/>
    <property type="project" value="UniProtKB-SubCell"/>
</dbReference>
<dbReference type="GO" id="GO:0042273">
    <property type="term" value="P:ribosomal large subunit biogenesis"/>
    <property type="evidence" value="ECO:0007669"/>
    <property type="project" value="EnsemblFungi"/>
</dbReference>
<dbReference type="Gene3D" id="2.130.10.10">
    <property type="entry name" value="YVTN repeat-like/Quinoprotein amine dehydrogenase"/>
    <property type="match status" value="1"/>
</dbReference>
<dbReference type="InterPro" id="IPR015943">
    <property type="entry name" value="WD40/YVTN_repeat-like_dom_sf"/>
</dbReference>
<dbReference type="InterPro" id="IPR036322">
    <property type="entry name" value="WD40_repeat_dom_sf"/>
</dbReference>
<dbReference type="SUPFAM" id="SSF50978">
    <property type="entry name" value="WD40 repeat-like"/>
    <property type="match status" value="1"/>
</dbReference>
<gene>
    <name type="primary">JIP5</name>
    <name type="ordered locus">DEHA2B10824g</name>
</gene>
<protein>
    <recommendedName>
        <fullName>WD repeat-containing protein JIP5</fullName>
    </recommendedName>
</protein>
<name>JIP5_DEBHA</name>
<proteinExistence type="inferred from homology"/>
<sequence>MAKKKKSNATNAARLLESSISPIVEIKYPEPLFTIAAHPTKPILLSGLATGHIYCSTYDADILEEAQSTKREKLSLLEKEAFKTGKIAHINRSVSQSKQKWWTVIEDNADIPDGSNIVNNWKTKRHKGSCRSAIFDPLENSLGENIYSVGTDHIIKKANTETGKVLSKATISEHYSDKNDAITKLVHSTSHPFLLSGTENGDVLVYDSNNMASNQLKFNVSKAHDDSINHILPMPAVSAYHYLTLGSTTLSHIDIRKGIITQSDDQEDELLSMCFASDHVNDNKNDTVLVSHGEGIVTIWKNSKNRLMDQLSRIKVNKEASIDAIIPTMNCDDGEMVDSVWCGDSEGLLHRINYKKGKVVETRVHSSAAGKHGPADEVGILDIDYDYRLISAGMDSLKIWSNQEETLNSDSDDSDSDDSDSDIGSNDSEDSDSDDDDVAINNKIEDEVNDFSPDSDSETGNDDSDENLEDVADSDSNEDQIENVTDEEHQLSDTELPTKSLQIIRKKRFNVPEISNKTNINKKVVDINKLTKEQSTKKADEEPEETEEPDKKKQKLKAKQMSTKQIRNMQKHEHGIRRFDDL</sequence>
<comment type="subcellular location">
    <subcellularLocation>
        <location evidence="1">Nucleus</location>
        <location evidence="1">Nucleolus</location>
    </subcellularLocation>
</comment>
<comment type="similarity">
    <text evidence="3">Belongs to the WD repeat WDR55 family.</text>
</comment>
<organism>
    <name type="scientific">Debaryomyces hansenii (strain ATCC 36239 / CBS 767 / BCRC 21394 / JCM 1990 / NBRC 0083 / IGC 2968)</name>
    <name type="common">Yeast</name>
    <name type="synonym">Torulaspora hansenii</name>
    <dbReference type="NCBI Taxonomy" id="284592"/>
    <lineage>
        <taxon>Eukaryota</taxon>
        <taxon>Fungi</taxon>
        <taxon>Dikarya</taxon>
        <taxon>Ascomycota</taxon>
        <taxon>Saccharomycotina</taxon>
        <taxon>Pichiomycetes</taxon>
        <taxon>Debaryomycetaceae</taxon>
        <taxon>Debaryomyces</taxon>
    </lineage>
</organism>
<keyword id="KW-0539">Nucleus</keyword>
<keyword id="KW-1185">Reference proteome</keyword>
<keyword id="KW-0677">Repeat</keyword>
<keyword id="KW-0853">WD repeat</keyword>
<accession>Q6BWJ5</accession>
<reference key="1">
    <citation type="journal article" date="2004" name="Nature">
        <title>Genome evolution in yeasts.</title>
        <authorList>
            <person name="Dujon B."/>
            <person name="Sherman D."/>
            <person name="Fischer G."/>
            <person name="Durrens P."/>
            <person name="Casaregola S."/>
            <person name="Lafontaine I."/>
            <person name="de Montigny J."/>
            <person name="Marck C."/>
            <person name="Neuveglise C."/>
            <person name="Talla E."/>
            <person name="Goffard N."/>
            <person name="Frangeul L."/>
            <person name="Aigle M."/>
            <person name="Anthouard V."/>
            <person name="Babour A."/>
            <person name="Barbe V."/>
            <person name="Barnay S."/>
            <person name="Blanchin S."/>
            <person name="Beckerich J.-M."/>
            <person name="Beyne E."/>
            <person name="Bleykasten C."/>
            <person name="Boisrame A."/>
            <person name="Boyer J."/>
            <person name="Cattolico L."/>
            <person name="Confanioleri F."/>
            <person name="de Daruvar A."/>
            <person name="Despons L."/>
            <person name="Fabre E."/>
            <person name="Fairhead C."/>
            <person name="Ferry-Dumazet H."/>
            <person name="Groppi A."/>
            <person name="Hantraye F."/>
            <person name="Hennequin C."/>
            <person name="Jauniaux N."/>
            <person name="Joyet P."/>
            <person name="Kachouri R."/>
            <person name="Kerrest A."/>
            <person name="Koszul R."/>
            <person name="Lemaire M."/>
            <person name="Lesur I."/>
            <person name="Ma L."/>
            <person name="Muller H."/>
            <person name="Nicaud J.-M."/>
            <person name="Nikolski M."/>
            <person name="Oztas S."/>
            <person name="Ozier-Kalogeropoulos O."/>
            <person name="Pellenz S."/>
            <person name="Potier S."/>
            <person name="Richard G.-F."/>
            <person name="Straub M.-L."/>
            <person name="Suleau A."/>
            <person name="Swennen D."/>
            <person name="Tekaia F."/>
            <person name="Wesolowski-Louvel M."/>
            <person name="Westhof E."/>
            <person name="Wirth B."/>
            <person name="Zeniou-Meyer M."/>
            <person name="Zivanovic Y."/>
            <person name="Bolotin-Fukuhara M."/>
            <person name="Thierry A."/>
            <person name="Bouchier C."/>
            <person name="Caudron B."/>
            <person name="Scarpelli C."/>
            <person name="Gaillardin C."/>
            <person name="Weissenbach J."/>
            <person name="Wincker P."/>
            <person name="Souciet J.-L."/>
        </authorList>
    </citation>
    <scope>NUCLEOTIDE SEQUENCE [LARGE SCALE GENOMIC DNA]</scope>
    <source>
        <strain>ATCC 36239 / CBS 767 / BCRC 21394 / JCM 1990 / NBRC 0083 / IGC 2968</strain>
    </source>
</reference>
<feature type="chain" id="PRO_0000333558" description="WD repeat-containing protein JIP5">
    <location>
        <begin position="1"/>
        <end position="582"/>
    </location>
</feature>
<feature type="repeat" description="WD 1">
    <location>
        <begin position="27"/>
        <end position="68"/>
    </location>
</feature>
<feature type="repeat" description="WD 2">
    <location>
        <begin position="125"/>
        <end position="168"/>
    </location>
</feature>
<feature type="repeat" description="WD 3">
    <location>
        <begin position="177"/>
        <end position="216"/>
    </location>
</feature>
<feature type="repeat" description="WD 4">
    <location>
        <begin position="265"/>
        <end position="310"/>
    </location>
</feature>
<feature type="repeat" description="WD 5">
    <location>
        <begin position="373"/>
        <end position="410"/>
    </location>
</feature>
<feature type="region of interest" description="Disordered" evidence="2">
    <location>
        <begin position="405"/>
        <end position="496"/>
    </location>
</feature>
<feature type="region of interest" description="Disordered" evidence="2">
    <location>
        <begin position="531"/>
        <end position="582"/>
    </location>
</feature>
<feature type="compositionally biased region" description="Acidic residues" evidence="2">
    <location>
        <begin position="410"/>
        <end position="438"/>
    </location>
</feature>
<feature type="compositionally biased region" description="Acidic residues" evidence="2">
    <location>
        <begin position="447"/>
        <end position="485"/>
    </location>
</feature>
<feature type="compositionally biased region" description="Basic and acidic residues" evidence="2">
    <location>
        <begin position="531"/>
        <end position="540"/>
    </location>
</feature>
<feature type="compositionally biased region" description="Basic and acidic residues" evidence="2">
    <location>
        <begin position="570"/>
        <end position="582"/>
    </location>
</feature>